<comment type="subcellular location">
    <subcellularLocation>
        <location>Cytoplasm</location>
    </subcellularLocation>
</comment>
<comment type="similarity">
    <text evidence="2">Belongs to the universal ribosomal protein uS8 family.</text>
</comment>
<gene>
    <name type="primary">RPS15AA</name>
    <name type="ordered locus">At1g07770</name>
    <name type="ORF">F24B9.12</name>
</gene>
<gene>
    <name type="primary">RPS15AF</name>
    <name type="ordered locus">At5g59850</name>
    <name type="ORF">MMN10.16</name>
    <name type="ORF">MMN10.8</name>
</gene>
<dbReference type="EMBL" id="L27461">
    <property type="protein sequence ID" value="AAA61608.1"/>
    <property type="molecule type" value="Genomic_DNA"/>
</dbReference>
<dbReference type="EMBL" id="AF001412">
    <property type="protein sequence ID" value="AAB58750.1"/>
    <property type="molecule type" value="mRNA"/>
</dbReference>
<dbReference type="EMBL" id="AC007583">
    <property type="protein sequence ID" value="AAF75076.1"/>
    <property type="molecule type" value="Genomic_DNA"/>
</dbReference>
<dbReference type="EMBL" id="AB015475">
    <property type="protein sequence ID" value="BAB08353.1"/>
    <property type="molecule type" value="Genomic_DNA"/>
</dbReference>
<dbReference type="EMBL" id="CP002684">
    <property type="protein sequence ID" value="AEE28177.1"/>
    <property type="molecule type" value="Genomic_DNA"/>
</dbReference>
<dbReference type="EMBL" id="CP002684">
    <property type="protein sequence ID" value="AEE28178.1"/>
    <property type="molecule type" value="Genomic_DNA"/>
</dbReference>
<dbReference type="EMBL" id="CP002684">
    <property type="protein sequence ID" value="ANM58067.1"/>
    <property type="molecule type" value="Genomic_DNA"/>
</dbReference>
<dbReference type="EMBL" id="CP002688">
    <property type="protein sequence ID" value="AED97242.1"/>
    <property type="molecule type" value="Genomic_DNA"/>
</dbReference>
<dbReference type="EMBL" id="AF332447">
    <property type="protein sequence ID" value="AAG48810.1"/>
    <property type="molecule type" value="mRNA"/>
</dbReference>
<dbReference type="EMBL" id="AF360284">
    <property type="protein sequence ID" value="AAK25994.1"/>
    <property type="molecule type" value="mRNA"/>
</dbReference>
<dbReference type="EMBL" id="AF386922">
    <property type="protein sequence ID" value="AAK62367.1"/>
    <property type="molecule type" value="mRNA"/>
</dbReference>
<dbReference type="EMBL" id="AY042830">
    <property type="protein sequence ID" value="AAK68770.1"/>
    <property type="molecule type" value="mRNA"/>
</dbReference>
<dbReference type="EMBL" id="AY051040">
    <property type="protein sequence ID" value="AAK93717.1"/>
    <property type="molecule type" value="mRNA"/>
</dbReference>
<dbReference type="EMBL" id="AY081472">
    <property type="protein sequence ID" value="AAM10034.1"/>
    <property type="molecule type" value="mRNA"/>
</dbReference>
<dbReference type="EMBL" id="AY081689">
    <property type="protein sequence ID" value="AAM10251.1"/>
    <property type="molecule type" value="mRNA"/>
</dbReference>
<dbReference type="EMBL" id="AY035157">
    <property type="protein sequence ID" value="AAK59661.1"/>
    <property type="molecule type" value="mRNA"/>
</dbReference>
<dbReference type="EMBL" id="AY063028">
    <property type="protein sequence ID" value="AAL34202.1"/>
    <property type="molecule type" value="mRNA"/>
</dbReference>
<dbReference type="EMBL" id="BT000671">
    <property type="protein sequence ID" value="AAN31818.1"/>
    <property type="molecule type" value="mRNA"/>
</dbReference>
<dbReference type="EMBL" id="AY088335">
    <property type="protein sequence ID" value="AAM65874.1"/>
    <property type="molecule type" value="mRNA"/>
</dbReference>
<dbReference type="EMBL" id="AY087576">
    <property type="protein sequence ID" value="AAM65118.1"/>
    <property type="molecule type" value="mRNA"/>
</dbReference>
<dbReference type="PIR" id="B86213">
    <property type="entry name" value="B86213"/>
</dbReference>
<dbReference type="RefSeq" id="NP_200793.1">
    <property type="nucleotide sequence ID" value="NM_125378.4"/>
</dbReference>
<dbReference type="SMR" id="P42798"/>
<dbReference type="BioGRID" id="21351">
    <property type="interactions" value="150"/>
</dbReference>
<dbReference type="BioGRID" id="22532">
    <property type="interactions" value="154"/>
</dbReference>
<dbReference type="FunCoup" id="P42798">
    <property type="interactions" value="3290"/>
</dbReference>
<dbReference type="IntAct" id="P42798">
    <property type="interactions" value="1"/>
</dbReference>
<dbReference type="STRING" id="3702.P42798"/>
<dbReference type="PaxDb" id="3702-AT1G07770.1"/>
<dbReference type="ProteomicsDB" id="236480"/>
<dbReference type="EnsemblPlants" id="AT1G07770.1">
    <property type="protein sequence ID" value="AT1G07770.1"/>
    <property type="gene ID" value="AT1G07770"/>
</dbReference>
<dbReference type="EnsemblPlants" id="AT1G07770.2">
    <property type="protein sequence ID" value="AT1G07770.2"/>
    <property type="gene ID" value="AT1G07770"/>
</dbReference>
<dbReference type="EnsemblPlants" id="AT1G07770.3">
    <property type="protein sequence ID" value="AT1G07770.3"/>
    <property type="gene ID" value="AT1G07770"/>
</dbReference>
<dbReference type="EnsemblPlants" id="AT5G59850.1">
    <property type="protein sequence ID" value="AT5G59850.1"/>
    <property type="gene ID" value="AT5G59850"/>
</dbReference>
<dbReference type="GeneID" id="836107"/>
<dbReference type="GeneID" id="837291"/>
<dbReference type="Gramene" id="AT1G07770.1">
    <property type="protein sequence ID" value="AT1G07770.1"/>
    <property type="gene ID" value="AT1G07770"/>
</dbReference>
<dbReference type="Gramene" id="AT1G07770.2">
    <property type="protein sequence ID" value="AT1G07770.2"/>
    <property type="gene ID" value="AT1G07770"/>
</dbReference>
<dbReference type="Gramene" id="AT1G07770.3">
    <property type="protein sequence ID" value="AT1G07770.3"/>
    <property type="gene ID" value="AT1G07770"/>
</dbReference>
<dbReference type="Gramene" id="AT5G59850.1">
    <property type="protein sequence ID" value="AT5G59850.1"/>
    <property type="gene ID" value="AT5G59850"/>
</dbReference>
<dbReference type="KEGG" id="ath:AT1G07770"/>
<dbReference type="KEGG" id="ath:AT5G59850"/>
<dbReference type="Araport" id="AT1G07770"/>
<dbReference type="Araport" id="AT5G59850"/>
<dbReference type="TAIR" id="AT1G07770">
    <property type="gene designation" value="RPS15A"/>
</dbReference>
<dbReference type="TAIR" id="AT5G59850"/>
<dbReference type="eggNOG" id="KOG1754">
    <property type="taxonomic scope" value="Eukaryota"/>
</dbReference>
<dbReference type="HOGENOM" id="CLU_098428_1_1_1"/>
<dbReference type="InParanoid" id="P42798"/>
<dbReference type="OMA" id="LPAKNFG"/>
<dbReference type="OrthoDB" id="1031653at2759"/>
<dbReference type="PhylomeDB" id="P42798"/>
<dbReference type="CD-CODE" id="4299E36E">
    <property type="entry name" value="Nucleolus"/>
</dbReference>
<dbReference type="PRO" id="PR:P42798"/>
<dbReference type="Proteomes" id="UP000006548">
    <property type="component" value="Chromosome 1"/>
</dbReference>
<dbReference type="Proteomes" id="UP000006548">
    <property type="component" value="Chromosome 5"/>
</dbReference>
<dbReference type="ExpressionAtlas" id="P42798">
    <property type="expression patterns" value="baseline and differential"/>
</dbReference>
<dbReference type="GO" id="GO:0022626">
    <property type="term" value="C:cytosolic ribosome"/>
    <property type="evidence" value="ECO:0007005"/>
    <property type="project" value="TAIR"/>
</dbReference>
<dbReference type="GO" id="GO:0022627">
    <property type="term" value="C:cytosolic small ribosomal subunit"/>
    <property type="evidence" value="ECO:0007005"/>
    <property type="project" value="TAIR"/>
</dbReference>
<dbReference type="GO" id="GO:0009505">
    <property type="term" value="C:plant-type cell wall"/>
    <property type="evidence" value="ECO:0007005"/>
    <property type="project" value="TAIR"/>
</dbReference>
<dbReference type="GO" id="GO:0000325">
    <property type="term" value="C:plant-type vacuole"/>
    <property type="evidence" value="ECO:0007005"/>
    <property type="project" value="TAIR"/>
</dbReference>
<dbReference type="GO" id="GO:0009506">
    <property type="term" value="C:plasmodesma"/>
    <property type="evidence" value="ECO:0007005"/>
    <property type="project" value="TAIR"/>
</dbReference>
<dbReference type="GO" id="GO:0003735">
    <property type="term" value="F:structural constituent of ribosome"/>
    <property type="evidence" value="ECO:0000314"/>
    <property type="project" value="CAFA"/>
</dbReference>
<dbReference type="GO" id="GO:0006412">
    <property type="term" value="P:translation"/>
    <property type="evidence" value="ECO:0007669"/>
    <property type="project" value="InterPro"/>
</dbReference>
<dbReference type="FunFam" id="3.30.1370.30:FF:000001">
    <property type="entry name" value="40S ribosomal protein S15a"/>
    <property type="match status" value="1"/>
</dbReference>
<dbReference type="FunFam" id="3.30.1490.10:FF:000002">
    <property type="entry name" value="40S ribosomal protein S15a"/>
    <property type="match status" value="1"/>
</dbReference>
<dbReference type="Gene3D" id="3.30.1370.30">
    <property type="match status" value="1"/>
</dbReference>
<dbReference type="Gene3D" id="3.30.1490.10">
    <property type="match status" value="1"/>
</dbReference>
<dbReference type="HAMAP" id="MF_01302_A">
    <property type="entry name" value="Ribosomal_uS8_A"/>
    <property type="match status" value="1"/>
</dbReference>
<dbReference type="InterPro" id="IPR000630">
    <property type="entry name" value="Ribosomal_uS8"/>
</dbReference>
<dbReference type="InterPro" id="IPR047863">
    <property type="entry name" value="Ribosomal_uS8_CS"/>
</dbReference>
<dbReference type="InterPro" id="IPR035987">
    <property type="entry name" value="Ribosomal_uS8_sf"/>
</dbReference>
<dbReference type="NCBIfam" id="NF003115">
    <property type="entry name" value="PRK04034.1"/>
    <property type="match status" value="1"/>
</dbReference>
<dbReference type="PANTHER" id="PTHR11758">
    <property type="entry name" value="40S RIBOSOMAL PROTEIN S15A"/>
    <property type="match status" value="1"/>
</dbReference>
<dbReference type="Pfam" id="PF00410">
    <property type="entry name" value="Ribosomal_S8"/>
    <property type="match status" value="1"/>
</dbReference>
<dbReference type="SUPFAM" id="SSF56047">
    <property type="entry name" value="Ribosomal protein S8"/>
    <property type="match status" value="1"/>
</dbReference>
<dbReference type="PROSITE" id="PS00053">
    <property type="entry name" value="RIBOSOMAL_S8"/>
    <property type="match status" value="1"/>
</dbReference>
<name>R15A1_ARATH</name>
<reference key="1">
    <citation type="journal article" date="1994" name="Plant Physiol.">
        <title>Nucleotide and protein sequences of a cytoplasmic ribosomal protein S15a gene from Arabidopsis thaliana.</title>
        <authorList>
            <person name="Bonham-Smith P.C."/>
            <person name="Moloney M.M."/>
        </authorList>
    </citation>
    <scope>NUCLEOTIDE SEQUENCE [GENOMIC DNA] (AT1G07770)</scope>
    <source>
        <strain>cv. Columbia</strain>
    </source>
</reference>
<reference key="2">
    <citation type="submission" date="1997-06" db="EMBL/GenBank/DDBJ databases">
        <title>Arabidopsis thaliana cDNA for cytoplasmic ribosomal protein S15a.</title>
        <authorList>
            <person name="Chen Z."/>
            <person name="Bonham-Smith P.C."/>
        </authorList>
    </citation>
    <scope>NUCLEOTIDE SEQUENCE [MRNA] (AT1G07770)</scope>
    <source>
        <strain>cv. Columbia</strain>
    </source>
</reference>
<reference key="3">
    <citation type="journal article" date="2000" name="Nature">
        <title>Sequence and analysis of chromosome 1 of the plant Arabidopsis thaliana.</title>
        <authorList>
            <person name="Theologis A."/>
            <person name="Ecker J.R."/>
            <person name="Palm C.J."/>
            <person name="Federspiel N.A."/>
            <person name="Kaul S."/>
            <person name="White O."/>
            <person name="Alonso J."/>
            <person name="Altafi H."/>
            <person name="Araujo R."/>
            <person name="Bowman C.L."/>
            <person name="Brooks S.Y."/>
            <person name="Buehler E."/>
            <person name="Chan A."/>
            <person name="Chao Q."/>
            <person name="Chen H."/>
            <person name="Cheuk R.F."/>
            <person name="Chin C.W."/>
            <person name="Chung M.K."/>
            <person name="Conn L."/>
            <person name="Conway A.B."/>
            <person name="Conway A.R."/>
            <person name="Creasy T.H."/>
            <person name="Dewar K."/>
            <person name="Dunn P."/>
            <person name="Etgu P."/>
            <person name="Feldblyum T.V."/>
            <person name="Feng J.-D."/>
            <person name="Fong B."/>
            <person name="Fujii C.Y."/>
            <person name="Gill J.E."/>
            <person name="Goldsmith A.D."/>
            <person name="Haas B."/>
            <person name="Hansen N.F."/>
            <person name="Hughes B."/>
            <person name="Huizar L."/>
            <person name="Hunter J.L."/>
            <person name="Jenkins J."/>
            <person name="Johnson-Hopson C."/>
            <person name="Khan S."/>
            <person name="Khaykin E."/>
            <person name="Kim C.J."/>
            <person name="Koo H.L."/>
            <person name="Kremenetskaia I."/>
            <person name="Kurtz D.B."/>
            <person name="Kwan A."/>
            <person name="Lam B."/>
            <person name="Langin-Hooper S."/>
            <person name="Lee A."/>
            <person name="Lee J.M."/>
            <person name="Lenz C.A."/>
            <person name="Li J.H."/>
            <person name="Li Y.-P."/>
            <person name="Lin X."/>
            <person name="Liu S.X."/>
            <person name="Liu Z.A."/>
            <person name="Luros J.S."/>
            <person name="Maiti R."/>
            <person name="Marziali A."/>
            <person name="Militscher J."/>
            <person name="Miranda M."/>
            <person name="Nguyen M."/>
            <person name="Nierman W.C."/>
            <person name="Osborne B.I."/>
            <person name="Pai G."/>
            <person name="Peterson J."/>
            <person name="Pham P.K."/>
            <person name="Rizzo M."/>
            <person name="Rooney T."/>
            <person name="Rowley D."/>
            <person name="Sakano H."/>
            <person name="Salzberg S.L."/>
            <person name="Schwartz J.R."/>
            <person name="Shinn P."/>
            <person name="Southwick A.M."/>
            <person name="Sun H."/>
            <person name="Tallon L.J."/>
            <person name="Tambunga G."/>
            <person name="Toriumi M.J."/>
            <person name="Town C.D."/>
            <person name="Utterback T."/>
            <person name="Van Aken S."/>
            <person name="Vaysberg M."/>
            <person name="Vysotskaia V.S."/>
            <person name="Walker M."/>
            <person name="Wu D."/>
            <person name="Yu G."/>
            <person name="Fraser C.M."/>
            <person name="Venter J.C."/>
            <person name="Davis R.W."/>
        </authorList>
    </citation>
    <scope>NUCLEOTIDE SEQUENCE [LARGE SCALE GENOMIC DNA] (AT1G07770)</scope>
    <source>
        <strain>cv. Columbia</strain>
    </source>
</reference>
<reference key="4">
    <citation type="journal article" date="1998" name="DNA Res.">
        <title>Structural analysis of Arabidopsis thaliana chromosome 5. VII. Sequence features of the regions of 1,013,767 bp covered by sixteen physically assigned P1 and TAC clones.</title>
        <authorList>
            <person name="Nakamura Y."/>
            <person name="Sato S."/>
            <person name="Asamizu E."/>
            <person name="Kaneko T."/>
            <person name="Kotani H."/>
            <person name="Miyajima N."/>
            <person name="Tabata S."/>
        </authorList>
    </citation>
    <scope>NUCLEOTIDE SEQUENCE [LARGE SCALE GENOMIC DNA] (AT5G59850)</scope>
    <source>
        <strain>cv. Columbia</strain>
    </source>
</reference>
<reference key="5">
    <citation type="journal article" date="2017" name="Plant J.">
        <title>Araport11: a complete reannotation of the Arabidopsis thaliana reference genome.</title>
        <authorList>
            <person name="Cheng C.Y."/>
            <person name="Krishnakumar V."/>
            <person name="Chan A.P."/>
            <person name="Thibaud-Nissen F."/>
            <person name="Schobel S."/>
            <person name="Town C.D."/>
        </authorList>
    </citation>
    <scope>GENOME REANNOTATION</scope>
    <source>
        <strain>cv. Columbia</strain>
    </source>
</reference>
<reference key="6">
    <citation type="journal article" date="2003" name="Science">
        <title>Empirical analysis of transcriptional activity in the Arabidopsis genome.</title>
        <authorList>
            <person name="Yamada K."/>
            <person name="Lim J."/>
            <person name="Dale J.M."/>
            <person name="Chen H."/>
            <person name="Shinn P."/>
            <person name="Palm C.J."/>
            <person name="Southwick A.M."/>
            <person name="Wu H.C."/>
            <person name="Kim C.J."/>
            <person name="Nguyen M."/>
            <person name="Pham P.K."/>
            <person name="Cheuk R.F."/>
            <person name="Karlin-Newmann G."/>
            <person name="Liu S.X."/>
            <person name="Lam B."/>
            <person name="Sakano H."/>
            <person name="Wu T."/>
            <person name="Yu G."/>
            <person name="Miranda M."/>
            <person name="Quach H.L."/>
            <person name="Tripp M."/>
            <person name="Chang C.H."/>
            <person name="Lee J.M."/>
            <person name="Toriumi M.J."/>
            <person name="Chan M.M."/>
            <person name="Tang C.C."/>
            <person name="Onodera C.S."/>
            <person name="Deng J.M."/>
            <person name="Akiyama K."/>
            <person name="Ansari Y."/>
            <person name="Arakawa T."/>
            <person name="Banh J."/>
            <person name="Banno F."/>
            <person name="Bowser L."/>
            <person name="Brooks S.Y."/>
            <person name="Carninci P."/>
            <person name="Chao Q."/>
            <person name="Choy N."/>
            <person name="Enju A."/>
            <person name="Goldsmith A.D."/>
            <person name="Gurjal M."/>
            <person name="Hansen N.F."/>
            <person name="Hayashizaki Y."/>
            <person name="Johnson-Hopson C."/>
            <person name="Hsuan V.W."/>
            <person name="Iida K."/>
            <person name="Karnes M."/>
            <person name="Khan S."/>
            <person name="Koesema E."/>
            <person name="Ishida J."/>
            <person name="Jiang P.X."/>
            <person name="Jones T."/>
            <person name="Kawai J."/>
            <person name="Kamiya A."/>
            <person name="Meyers C."/>
            <person name="Nakajima M."/>
            <person name="Narusaka M."/>
            <person name="Seki M."/>
            <person name="Sakurai T."/>
            <person name="Satou M."/>
            <person name="Tamse R."/>
            <person name="Vaysberg M."/>
            <person name="Wallender E.K."/>
            <person name="Wong C."/>
            <person name="Yamamura Y."/>
            <person name="Yuan S."/>
            <person name="Shinozaki K."/>
            <person name="Davis R.W."/>
            <person name="Theologis A."/>
            <person name="Ecker J.R."/>
        </authorList>
    </citation>
    <scope>NUCLEOTIDE SEQUENCE [LARGE SCALE MRNA] (AT1G07770 AND AT5G59850)</scope>
    <source>
        <strain>cv. Columbia</strain>
    </source>
</reference>
<reference key="7">
    <citation type="submission" date="2002-03" db="EMBL/GenBank/DDBJ databases">
        <title>Full-length cDNA from Arabidopsis thaliana.</title>
        <authorList>
            <person name="Brover V.V."/>
            <person name="Troukhan M.E."/>
            <person name="Alexandrov N.A."/>
            <person name="Lu Y.-P."/>
            <person name="Flavell R.B."/>
            <person name="Feldmann K.A."/>
        </authorList>
    </citation>
    <scope>NUCLEOTIDE SEQUENCE [LARGE SCALE MRNA] (AT1G07770 AND AT5G59850)</scope>
</reference>
<reference key="8">
    <citation type="journal article" date="2001" name="Plant Physiol.">
        <title>The organization of cytoplasmic ribosomal protein genes in the Arabidopsis genome.</title>
        <authorList>
            <person name="Barakat A."/>
            <person name="Szick-Miranda K."/>
            <person name="Chang I.-F."/>
            <person name="Guyot R."/>
            <person name="Blanc G."/>
            <person name="Cooke R."/>
            <person name="Delseny M."/>
            <person name="Bailey-Serres J."/>
        </authorList>
    </citation>
    <scope>GENE FAMILY ORGANIZATION</scope>
    <scope>NOMENCLATURE</scope>
</reference>
<reference key="9">
    <citation type="journal article" date="2023" name="Plant Cell">
        <title>An updated nomenclature for plant ribosomal protein genes.</title>
        <authorList>
            <person name="Scarpin M.R."/>
            <person name="Busche M."/>
            <person name="Martinez R.E."/>
            <person name="Harper L.C."/>
            <person name="Reiser L."/>
            <person name="Szakonyi D."/>
            <person name="Merchante C."/>
            <person name="Lan T."/>
            <person name="Xiong W."/>
            <person name="Mo B."/>
            <person name="Tang G."/>
            <person name="Chen X."/>
            <person name="Bailey-Serres J."/>
            <person name="Browning K.S."/>
            <person name="Brunkard J.O."/>
        </authorList>
    </citation>
    <scope>NOMENCLATURE</scope>
</reference>
<sequence>MVRISVLNDALKSMYNAEKRGKRQVMIRPSSKVIIKFLIVMQKHGYIGEFEYVDDHRSGKIVVELNGRLNKCGVISPRFDVGVKEIEGWTARLLPSRQFGYIVLTTSAGIMDHEEARRKNVGGKVLGFFY</sequence>
<proteinExistence type="evidence at transcript level"/>
<feature type="chain" id="PRO_0000126612" description="Small ribosomal subunit protein uS8z/uS8w">
    <location>
        <begin position="1"/>
        <end position="130"/>
    </location>
</feature>
<accession>P42798</accession>
<accession>Q7GD83</accession>
<organism>
    <name type="scientific">Arabidopsis thaliana</name>
    <name type="common">Mouse-ear cress</name>
    <dbReference type="NCBI Taxonomy" id="3702"/>
    <lineage>
        <taxon>Eukaryota</taxon>
        <taxon>Viridiplantae</taxon>
        <taxon>Streptophyta</taxon>
        <taxon>Embryophyta</taxon>
        <taxon>Tracheophyta</taxon>
        <taxon>Spermatophyta</taxon>
        <taxon>Magnoliopsida</taxon>
        <taxon>eudicotyledons</taxon>
        <taxon>Gunneridae</taxon>
        <taxon>Pentapetalae</taxon>
        <taxon>rosids</taxon>
        <taxon>malvids</taxon>
        <taxon>Brassicales</taxon>
        <taxon>Brassicaceae</taxon>
        <taxon>Camelineae</taxon>
        <taxon>Arabidopsis</taxon>
    </lineage>
</organism>
<keyword id="KW-0963">Cytoplasm</keyword>
<keyword id="KW-1185">Reference proteome</keyword>
<keyword id="KW-0687">Ribonucleoprotein</keyword>
<keyword id="KW-0689">Ribosomal protein</keyword>
<protein>
    <recommendedName>
        <fullName evidence="1">Small ribosomal subunit protein uS8z/uS8w</fullName>
    </recommendedName>
    <alternativeName>
        <fullName>40S ribosomal protein S15a-1</fullName>
    </alternativeName>
</protein>
<evidence type="ECO:0000303" key="1">
    <source>
    </source>
</evidence>
<evidence type="ECO:0000305" key="2"/>